<accession>Q8FQZ5</accession>
<dbReference type="EC" id="2.1.1.182" evidence="1"/>
<dbReference type="EMBL" id="BA000035">
    <property type="protein sequence ID" value="BAC17782.1"/>
    <property type="molecule type" value="Genomic_DNA"/>
</dbReference>
<dbReference type="RefSeq" id="WP_006770063.1">
    <property type="nucleotide sequence ID" value="NC_004369.1"/>
</dbReference>
<dbReference type="SMR" id="Q8FQZ5"/>
<dbReference type="STRING" id="196164.gene:10741378"/>
<dbReference type="KEGG" id="cef:CE0972"/>
<dbReference type="eggNOG" id="COG0030">
    <property type="taxonomic scope" value="Bacteria"/>
</dbReference>
<dbReference type="HOGENOM" id="CLU_041220_1_1_11"/>
<dbReference type="OrthoDB" id="9814755at2"/>
<dbReference type="Proteomes" id="UP000001409">
    <property type="component" value="Chromosome"/>
</dbReference>
<dbReference type="GO" id="GO:0005829">
    <property type="term" value="C:cytosol"/>
    <property type="evidence" value="ECO:0007669"/>
    <property type="project" value="TreeGrafter"/>
</dbReference>
<dbReference type="GO" id="GO:0052908">
    <property type="term" value="F:16S rRNA (adenine(1518)-N(6)/adenine(1519)-N(6))-dimethyltransferase activity"/>
    <property type="evidence" value="ECO:0007669"/>
    <property type="project" value="UniProtKB-EC"/>
</dbReference>
<dbReference type="GO" id="GO:0003723">
    <property type="term" value="F:RNA binding"/>
    <property type="evidence" value="ECO:0007669"/>
    <property type="project" value="UniProtKB-KW"/>
</dbReference>
<dbReference type="CDD" id="cd02440">
    <property type="entry name" value="AdoMet_MTases"/>
    <property type="match status" value="1"/>
</dbReference>
<dbReference type="FunFam" id="3.40.50.150:FF:000023">
    <property type="entry name" value="Ribosomal RNA small subunit methyltransferase A"/>
    <property type="match status" value="1"/>
</dbReference>
<dbReference type="Gene3D" id="1.10.8.100">
    <property type="entry name" value="Ribosomal RNA adenine dimethylase-like, domain 2"/>
    <property type="match status" value="1"/>
</dbReference>
<dbReference type="Gene3D" id="3.40.50.150">
    <property type="entry name" value="Vaccinia Virus protein VP39"/>
    <property type="match status" value="1"/>
</dbReference>
<dbReference type="HAMAP" id="MF_00607">
    <property type="entry name" value="16SrRNA_methyltr_A"/>
    <property type="match status" value="1"/>
</dbReference>
<dbReference type="InterPro" id="IPR001737">
    <property type="entry name" value="KsgA/Erm"/>
</dbReference>
<dbReference type="InterPro" id="IPR023165">
    <property type="entry name" value="rRNA_Ade_diMease-like_C"/>
</dbReference>
<dbReference type="InterPro" id="IPR020596">
    <property type="entry name" value="rRNA_Ade_Mease_Trfase_CS"/>
</dbReference>
<dbReference type="InterPro" id="IPR020598">
    <property type="entry name" value="rRNA_Ade_methylase_Trfase_N"/>
</dbReference>
<dbReference type="InterPro" id="IPR011530">
    <property type="entry name" value="rRNA_adenine_dimethylase"/>
</dbReference>
<dbReference type="InterPro" id="IPR029063">
    <property type="entry name" value="SAM-dependent_MTases_sf"/>
</dbReference>
<dbReference type="NCBIfam" id="TIGR00755">
    <property type="entry name" value="ksgA"/>
    <property type="match status" value="1"/>
</dbReference>
<dbReference type="PANTHER" id="PTHR11727">
    <property type="entry name" value="DIMETHYLADENOSINE TRANSFERASE"/>
    <property type="match status" value="1"/>
</dbReference>
<dbReference type="PANTHER" id="PTHR11727:SF7">
    <property type="entry name" value="DIMETHYLADENOSINE TRANSFERASE-RELATED"/>
    <property type="match status" value="1"/>
</dbReference>
<dbReference type="Pfam" id="PF00398">
    <property type="entry name" value="RrnaAD"/>
    <property type="match status" value="1"/>
</dbReference>
<dbReference type="SMART" id="SM00650">
    <property type="entry name" value="rADc"/>
    <property type="match status" value="1"/>
</dbReference>
<dbReference type="SUPFAM" id="SSF53335">
    <property type="entry name" value="S-adenosyl-L-methionine-dependent methyltransferases"/>
    <property type="match status" value="1"/>
</dbReference>
<dbReference type="PROSITE" id="PS01131">
    <property type="entry name" value="RRNA_A_DIMETH"/>
    <property type="match status" value="1"/>
</dbReference>
<dbReference type="PROSITE" id="PS51689">
    <property type="entry name" value="SAM_RNA_A_N6_MT"/>
    <property type="match status" value="1"/>
</dbReference>
<feature type="chain" id="PRO_0000101518" description="Ribosomal RNA small subunit methyltransferase A">
    <location>
        <begin position="1"/>
        <end position="289"/>
    </location>
</feature>
<feature type="binding site" evidence="1">
    <location>
        <position position="33"/>
    </location>
    <ligand>
        <name>S-adenosyl-L-methionine</name>
        <dbReference type="ChEBI" id="CHEBI:59789"/>
    </ligand>
</feature>
<feature type="binding site" evidence="1">
    <location>
        <position position="35"/>
    </location>
    <ligand>
        <name>S-adenosyl-L-methionine</name>
        <dbReference type="ChEBI" id="CHEBI:59789"/>
    </ligand>
</feature>
<feature type="binding site" evidence="1">
    <location>
        <position position="60"/>
    </location>
    <ligand>
        <name>S-adenosyl-L-methionine</name>
        <dbReference type="ChEBI" id="CHEBI:59789"/>
    </ligand>
</feature>
<feature type="binding site" evidence="1">
    <location>
        <position position="81"/>
    </location>
    <ligand>
        <name>S-adenosyl-L-methionine</name>
        <dbReference type="ChEBI" id="CHEBI:59789"/>
    </ligand>
</feature>
<feature type="binding site" evidence="1">
    <location>
        <position position="111"/>
    </location>
    <ligand>
        <name>S-adenosyl-L-methionine</name>
        <dbReference type="ChEBI" id="CHEBI:59789"/>
    </ligand>
</feature>
<feature type="binding site" evidence="1">
    <location>
        <position position="130"/>
    </location>
    <ligand>
        <name>S-adenosyl-L-methionine</name>
        <dbReference type="ChEBI" id="CHEBI:59789"/>
    </ligand>
</feature>
<comment type="function">
    <text evidence="1">Specifically dimethylates two adjacent adenosines (A1518 and A1519) in the loop of a conserved hairpin near the 3'-end of 16S rRNA in the 30S particle. May play a critical role in biogenesis of 30S subunits.</text>
</comment>
<comment type="catalytic activity">
    <reaction evidence="1">
        <text>adenosine(1518)/adenosine(1519) in 16S rRNA + 4 S-adenosyl-L-methionine = N(6)-dimethyladenosine(1518)/N(6)-dimethyladenosine(1519) in 16S rRNA + 4 S-adenosyl-L-homocysteine + 4 H(+)</text>
        <dbReference type="Rhea" id="RHEA:19609"/>
        <dbReference type="Rhea" id="RHEA-COMP:10232"/>
        <dbReference type="Rhea" id="RHEA-COMP:10233"/>
        <dbReference type="ChEBI" id="CHEBI:15378"/>
        <dbReference type="ChEBI" id="CHEBI:57856"/>
        <dbReference type="ChEBI" id="CHEBI:59789"/>
        <dbReference type="ChEBI" id="CHEBI:74411"/>
        <dbReference type="ChEBI" id="CHEBI:74493"/>
        <dbReference type="EC" id="2.1.1.182"/>
    </reaction>
</comment>
<comment type="subcellular location">
    <subcellularLocation>
        <location evidence="1">Cytoplasm</location>
    </subcellularLocation>
</comment>
<comment type="similarity">
    <text evidence="1">Belongs to the class I-like SAM-binding methyltransferase superfamily. rRNA adenine N(6)-methyltransferase family. RsmA subfamily.</text>
</comment>
<keyword id="KW-0963">Cytoplasm</keyword>
<keyword id="KW-0489">Methyltransferase</keyword>
<keyword id="KW-1185">Reference proteome</keyword>
<keyword id="KW-0694">RNA-binding</keyword>
<keyword id="KW-0698">rRNA processing</keyword>
<keyword id="KW-0949">S-adenosyl-L-methionine</keyword>
<keyword id="KW-0808">Transferase</keyword>
<protein>
    <recommendedName>
        <fullName evidence="1">Ribosomal RNA small subunit methyltransferase A</fullName>
        <ecNumber evidence="1">2.1.1.182</ecNumber>
    </recommendedName>
    <alternativeName>
        <fullName evidence="1">16S rRNA (adenine(1518)-N(6)/adenine(1519)-N(6))-dimethyltransferase</fullName>
    </alternativeName>
    <alternativeName>
        <fullName evidence="1">16S rRNA dimethyladenosine transferase</fullName>
    </alternativeName>
    <alternativeName>
        <fullName evidence="1">16S rRNA dimethylase</fullName>
    </alternativeName>
    <alternativeName>
        <fullName evidence="1">S-adenosylmethionine-6-N', N'-adenosyl(rRNA) dimethyltransferase</fullName>
    </alternativeName>
</protein>
<name>RSMA_COREF</name>
<reference key="1">
    <citation type="journal article" date="2003" name="Genome Res.">
        <title>Comparative complete genome sequence analysis of the amino acid replacements responsible for the thermostability of Corynebacterium efficiens.</title>
        <authorList>
            <person name="Nishio Y."/>
            <person name="Nakamura Y."/>
            <person name="Kawarabayasi Y."/>
            <person name="Usuda Y."/>
            <person name="Kimura E."/>
            <person name="Sugimoto S."/>
            <person name="Matsui K."/>
            <person name="Yamagishi A."/>
            <person name="Kikuchi H."/>
            <person name="Ikeo K."/>
            <person name="Gojobori T."/>
        </authorList>
    </citation>
    <scope>NUCLEOTIDE SEQUENCE [LARGE SCALE GENOMIC DNA]</scope>
    <source>
        <strain>DSM 44549 / YS-314 / AJ 12310 / JCM 11189 / NBRC 100395</strain>
    </source>
</reference>
<gene>
    <name evidence="1" type="primary">rsmA</name>
    <name evidence="1" type="synonym">ksgA</name>
    <name type="ordered locus">CE0972</name>
</gene>
<organism>
    <name type="scientific">Corynebacterium efficiens (strain DSM 44549 / YS-314 / AJ 12310 / JCM 11189 / NBRC 100395)</name>
    <dbReference type="NCBI Taxonomy" id="196164"/>
    <lineage>
        <taxon>Bacteria</taxon>
        <taxon>Bacillati</taxon>
        <taxon>Actinomycetota</taxon>
        <taxon>Actinomycetes</taxon>
        <taxon>Mycobacteriales</taxon>
        <taxon>Corynebacteriaceae</taxon>
        <taxon>Corynebacterium</taxon>
    </lineage>
</organism>
<proteinExistence type="inferred from homology"/>
<evidence type="ECO:0000255" key="1">
    <source>
        <dbReference type="HAMAP-Rule" id="MF_00607"/>
    </source>
</evidence>
<sequence length="289" mass="30950">MEEPSGAQLLGPVEIRALAEKLDVTPTKKLGQNFVHDPNTVRRIVTAADLTPEDHVVEVGPGLGSLTLALVEKAASVTAVEIDPRLAAELPATFAWRAPGLADKLTVVQKDALKVQQSDFTTQPTALVANLPYNVSVPVLLHMLAEFPSITKVLVMVQLEVADRLAAVPGSKIYGVPSVKASFYGEVSKAGTIGKHVFWPAPQIESGLVKIIRTHTPWPQDDATRAKVWPVIDAAFLQRRKTLRAALSGHFGSASAAEEALRAADIDPQLRGERLDVADYVRLAGVIGS</sequence>